<proteinExistence type="inferred from homology"/>
<accession>Q9JRS8</accession>
<keyword id="KW-0963">Cytoplasm</keyword>
<keyword id="KW-0255">Endonuclease</keyword>
<keyword id="KW-0378">Hydrolase</keyword>
<keyword id="KW-0479">Metal-binding</keyword>
<keyword id="KW-0540">Nuclease</keyword>
<keyword id="KW-0690">Ribosome biogenesis</keyword>
<keyword id="KW-0698">rRNA processing</keyword>
<keyword id="KW-0862">Zinc</keyword>
<protein>
    <recommendedName>
        <fullName evidence="1">Endoribonuclease YbeY</fullName>
        <ecNumber evidence="1">3.1.-.-</ecNumber>
    </recommendedName>
</protein>
<feature type="chain" id="PRO_0000102396" description="Endoribonuclease YbeY">
    <location>
        <begin position="1"/>
        <end position="154"/>
    </location>
</feature>
<feature type="binding site" evidence="1">
    <location>
        <position position="114"/>
    </location>
    <ligand>
        <name>Zn(2+)</name>
        <dbReference type="ChEBI" id="CHEBI:29105"/>
        <note>catalytic</note>
    </ligand>
</feature>
<feature type="binding site" evidence="1">
    <location>
        <position position="118"/>
    </location>
    <ligand>
        <name>Zn(2+)</name>
        <dbReference type="ChEBI" id="CHEBI:29105"/>
        <note>catalytic</note>
    </ligand>
</feature>
<feature type="binding site" evidence="1">
    <location>
        <position position="124"/>
    </location>
    <ligand>
        <name>Zn(2+)</name>
        <dbReference type="ChEBI" id="CHEBI:29105"/>
        <note>catalytic</note>
    </ligand>
</feature>
<reference key="1">
    <citation type="journal article" date="1998" name="Microbiol. Immunol.">
        <title>Molecular characterization of low-molecular-weight component protein, Flp, in Actinobacillus actinomycetemcomitans fimbriae.</title>
        <authorList>
            <person name="Inoue T."/>
            <person name="Tanimoto I."/>
            <person name="Ohta H."/>
            <person name="Kato K."/>
            <person name="Murayama Y."/>
            <person name="Fukui K."/>
        </authorList>
    </citation>
    <scope>NUCLEOTIDE SEQUENCE [GENOMIC DNA]</scope>
</reference>
<name>YBEY_AGGAC</name>
<evidence type="ECO:0000255" key="1">
    <source>
        <dbReference type="HAMAP-Rule" id="MF_00009"/>
    </source>
</evidence>
<dbReference type="EC" id="3.1.-.-" evidence="1"/>
<dbReference type="EMBL" id="AB005741">
    <property type="protein sequence ID" value="BAA96100.1"/>
    <property type="molecule type" value="Genomic_DNA"/>
</dbReference>
<dbReference type="RefSeq" id="WP_005538960.1">
    <property type="nucleotide sequence ID" value="NZ_VSEW01000005.1"/>
</dbReference>
<dbReference type="SMR" id="Q9JRS8"/>
<dbReference type="STRING" id="714.ACT75_08185"/>
<dbReference type="eggNOG" id="COG0319">
    <property type="taxonomic scope" value="Bacteria"/>
</dbReference>
<dbReference type="OMA" id="RMRIHPL"/>
<dbReference type="GO" id="GO:0005737">
    <property type="term" value="C:cytoplasm"/>
    <property type="evidence" value="ECO:0007669"/>
    <property type="project" value="UniProtKB-SubCell"/>
</dbReference>
<dbReference type="GO" id="GO:0004222">
    <property type="term" value="F:metalloendopeptidase activity"/>
    <property type="evidence" value="ECO:0007669"/>
    <property type="project" value="InterPro"/>
</dbReference>
<dbReference type="GO" id="GO:0004521">
    <property type="term" value="F:RNA endonuclease activity"/>
    <property type="evidence" value="ECO:0007669"/>
    <property type="project" value="UniProtKB-UniRule"/>
</dbReference>
<dbReference type="GO" id="GO:0008270">
    <property type="term" value="F:zinc ion binding"/>
    <property type="evidence" value="ECO:0007669"/>
    <property type="project" value="UniProtKB-UniRule"/>
</dbReference>
<dbReference type="GO" id="GO:0006364">
    <property type="term" value="P:rRNA processing"/>
    <property type="evidence" value="ECO:0007669"/>
    <property type="project" value="UniProtKB-UniRule"/>
</dbReference>
<dbReference type="Gene3D" id="3.40.390.30">
    <property type="entry name" value="Metalloproteases ('zincins'), catalytic domain"/>
    <property type="match status" value="1"/>
</dbReference>
<dbReference type="HAMAP" id="MF_00009">
    <property type="entry name" value="Endoribonucl_YbeY"/>
    <property type="match status" value="1"/>
</dbReference>
<dbReference type="InterPro" id="IPR023091">
    <property type="entry name" value="MetalPrtase_cat_dom_sf_prd"/>
</dbReference>
<dbReference type="InterPro" id="IPR002036">
    <property type="entry name" value="YbeY"/>
</dbReference>
<dbReference type="InterPro" id="IPR020549">
    <property type="entry name" value="YbeY_CS"/>
</dbReference>
<dbReference type="NCBIfam" id="TIGR00043">
    <property type="entry name" value="rRNA maturation RNase YbeY"/>
    <property type="match status" value="1"/>
</dbReference>
<dbReference type="PANTHER" id="PTHR46986">
    <property type="entry name" value="ENDORIBONUCLEASE YBEY, CHLOROPLASTIC"/>
    <property type="match status" value="1"/>
</dbReference>
<dbReference type="PANTHER" id="PTHR46986:SF1">
    <property type="entry name" value="ENDORIBONUCLEASE YBEY, CHLOROPLASTIC"/>
    <property type="match status" value="1"/>
</dbReference>
<dbReference type="Pfam" id="PF02130">
    <property type="entry name" value="YbeY"/>
    <property type="match status" value="1"/>
</dbReference>
<dbReference type="SUPFAM" id="SSF55486">
    <property type="entry name" value="Metalloproteases ('zincins'), catalytic domain"/>
    <property type="match status" value="1"/>
</dbReference>
<dbReference type="PROSITE" id="PS01306">
    <property type="entry name" value="UPF0054"/>
    <property type="match status" value="1"/>
</dbReference>
<organism>
    <name type="scientific">Aggregatibacter actinomycetemcomitans</name>
    <name type="common">Actinobacillus actinomycetemcomitans</name>
    <name type="synonym">Haemophilus actinomycetemcomitans</name>
    <dbReference type="NCBI Taxonomy" id="714"/>
    <lineage>
        <taxon>Bacteria</taxon>
        <taxon>Pseudomonadati</taxon>
        <taxon>Pseudomonadota</taxon>
        <taxon>Gammaproteobacteria</taxon>
        <taxon>Pasteurellales</taxon>
        <taxon>Pasteurellaceae</taxon>
        <taxon>Aggregatibacter</taxon>
    </lineage>
</organism>
<sequence>MGKMIIDLQIASADESGLPTAAQIEQWATAAVQPQSGEVEMTVRIVDETESHALNFNYRGKDHPTNVLSFPFECPDEVELPLLGDLVICRQVVEREAQEQEKPLIAHWAHMVVHGSLHLLGYDHIEDDEAEEMESLETQIMMGLGFVDPYLSEK</sequence>
<comment type="function">
    <text evidence="1">Single strand-specific metallo-endoribonuclease involved in late-stage 70S ribosome quality control and in maturation of the 3' terminus of the 16S rRNA.</text>
</comment>
<comment type="cofactor">
    <cofactor evidence="1">
        <name>Zn(2+)</name>
        <dbReference type="ChEBI" id="CHEBI:29105"/>
    </cofactor>
    <text evidence="1">Binds 1 zinc ion.</text>
</comment>
<comment type="subcellular location">
    <subcellularLocation>
        <location evidence="1">Cytoplasm</location>
    </subcellularLocation>
</comment>
<comment type="similarity">
    <text evidence="1">Belongs to the endoribonuclease YbeY family.</text>
</comment>
<gene>
    <name evidence="1" type="primary">ybeY</name>
</gene>